<keyword id="KW-0002">3D-structure</keyword>
<keyword id="KW-0903">Direct protein sequencing</keyword>
<keyword id="KW-0470">Melanin biosynthesis</keyword>
<keyword id="KW-0521">NADP</keyword>
<keyword id="KW-0560">Oxidoreductase</keyword>
<keyword id="KW-1185">Reference proteome</keyword>
<organism>
    <name type="scientific">Pyricularia oryzae (strain 70-15 / ATCC MYA-4617 / FGSC 8958)</name>
    <name type="common">Rice blast fungus</name>
    <name type="synonym">Magnaporthe oryzae</name>
    <dbReference type="NCBI Taxonomy" id="242507"/>
    <lineage>
        <taxon>Eukaryota</taxon>
        <taxon>Fungi</taxon>
        <taxon>Dikarya</taxon>
        <taxon>Ascomycota</taxon>
        <taxon>Pezizomycotina</taxon>
        <taxon>Sordariomycetes</taxon>
        <taxon>Sordariomycetidae</taxon>
        <taxon>Magnaporthales</taxon>
        <taxon>Pyriculariaceae</taxon>
        <taxon>Pyricularia</taxon>
    </lineage>
</organism>
<gene>
    <name type="ORF">MGG_02252</name>
</gene>
<evidence type="ECO:0000256" key="1">
    <source>
        <dbReference type="SAM" id="MobiDB-lite"/>
    </source>
</evidence>
<evidence type="ECO:0000269" key="2">
    <source>
    </source>
</evidence>
<evidence type="ECO:0000269" key="3">
    <source>
    </source>
</evidence>
<evidence type="ECO:0000305" key="4"/>
<evidence type="ECO:0007829" key="5">
    <source>
        <dbReference type="PDB" id="1G0N"/>
    </source>
</evidence>
<evidence type="ECO:0007829" key="6">
    <source>
        <dbReference type="PDB" id="1G0O"/>
    </source>
</evidence>
<accession>Q12634</accession>
<accession>A4R3G6</accession>
<accession>G4MQ18</accession>
<accession>Q5I7G0</accession>
<sequence>MPAVTQPRGESKYDAIPGPLGPQSASLEGKVALVTGAGRGIGREMAMELGRRGCKVIVNYANSTESAEEVVAAIKKNGSDAACVKANVGVVEDIVRMFEEAVKIFGKLDIVCSNSGVVSFGHVKDVTPEEFDRVFTINTRGQFFVAREAYKHLEIGGRLILMGSITGQAKAVPKHAVYSGSKGAIETFARCMAIDMADKKITVNVVAPGGIKTDMYHAVCREYIPNGENLSNEEVDEYAASAWSPLHRVGLPIDIARVVCFLASNDGGWVTGKVIGIDGGACM</sequence>
<dbReference type="EC" id="1.1.1.252"/>
<dbReference type="EMBL" id="L22309">
    <property type="protein sequence ID" value="AAA19514.1"/>
    <property type="molecule type" value="mRNA"/>
</dbReference>
<dbReference type="EMBL" id="AY846878">
    <property type="protein sequence ID" value="AAW55623.1"/>
    <property type="molecule type" value="Genomic_DNA"/>
</dbReference>
<dbReference type="EMBL" id="CM001231">
    <property type="protein sequence ID" value="EHA56411.1"/>
    <property type="molecule type" value="Genomic_DNA"/>
</dbReference>
<dbReference type="PIR" id="S41412">
    <property type="entry name" value="S41412"/>
</dbReference>
<dbReference type="RefSeq" id="XP_003709023.1">
    <property type="nucleotide sequence ID" value="XM_003708975.1"/>
</dbReference>
<dbReference type="PDB" id="1DOH">
    <property type="method" value="X-ray"/>
    <property type="resolution" value="2.10 A"/>
    <property type="chains" value="A/B=1-283"/>
</dbReference>
<dbReference type="PDB" id="1G0N">
    <property type="method" value="X-ray"/>
    <property type="resolution" value="2.00 A"/>
    <property type="chains" value="A/B=1-283"/>
</dbReference>
<dbReference type="PDB" id="1G0O">
    <property type="method" value="X-ray"/>
    <property type="resolution" value="1.70 A"/>
    <property type="chains" value="A/B/C/D=1-283"/>
</dbReference>
<dbReference type="PDB" id="1YBV">
    <property type="method" value="X-ray"/>
    <property type="resolution" value="2.80 A"/>
    <property type="chains" value="A/B=1-283"/>
</dbReference>
<dbReference type="PDBsum" id="1DOH"/>
<dbReference type="PDBsum" id="1G0N"/>
<dbReference type="PDBsum" id="1G0O"/>
<dbReference type="PDBsum" id="1YBV"/>
<dbReference type="SMR" id="Q12634"/>
<dbReference type="STRING" id="242507.Q12634"/>
<dbReference type="EnsemblFungi" id="MGG_02252T0">
    <property type="protein sequence ID" value="MGG_02252T0"/>
    <property type="gene ID" value="MGG_02252"/>
</dbReference>
<dbReference type="GeneID" id="2681349"/>
<dbReference type="KEGG" id="mgr:MGG_02252"/>
<dbReference type="VEuPathDB" id="FungiDB:MGG_02252"/>
<dbReference type="eggNOG" id="KOG0725">
    <property type="taxonomic scope" value="Eukaryota"/>
</dbReference>
<dbReference type="HOGENOM" id="CLU_010194_1_3_1"/>
<dbReference type="InParanoid" id="Q12634"/>
<dbReference type="OMA" id="EYACTWS"/>
<dbReference type="OrthoDB" id="47007at2759"/>
<dbReference type="BRENDA" id="1.1.1.252">
    <property type="organism ID" value="5238"/>
</dbReference>
<dbReference type="BRENDA" id="1.1.1.B57">
    <property type="organism ID" value="3152"/>
</dbReference>
<dbReference type="UniPathway" id="UPA00785"/>
<dbReference type="EvolutionaryTrace" id="Q12634"/>
<dbReference type="PHI-base" id="PHI:2022"/>
<dbReference type="PHI-base" id="PHI:685"/>
<dbReference type="Proteomes" id="UP000009058">
    <property type="component" value="Chromosome 1"/>
</dbReference>
<dbReference type="GO" id="GO:0047039">
    <property type="term" value="F:tetrahydroxynaphthalene reductase activity"/>
    <property type="evidence" value="ECO:0007669"/>
    <property type="project" value="UniProtKB-EC"/>
</dbReference>
<dbReference type="GO" id="GO:0042438">
    <property type="term" value="P:melanin biosynthetic process"/>
    <property type="evidence" value="ECO:0007669"/>
    <property type="project" value="UniProtKB-UniPathway"/>
</dbReference>
<dbReference type="CDD" id="cd05362">
    <property type="entry name" value="THN_reductase-like_SDR_c"/>
    <property type="match status" value="1"/>
</dbReference>
<dbReference type="FunFam" id="3.40.50.720:FF:000084">
    <property type="entry name" value="Short-chain dehydrogenase reductase"/>
    <property type="match status" value="1"/>
</dbReference>
<dbReference type="Gene3D" id="3.40.50.720">
    <property type="entry name" value="NAD(P)-binding Rossmann-like Domain"/>
    <property type="match status" value="1"/>
</dbReference>
<dbReference type="InterPro" id="IPR036291">
    <property type="entry name" value="NAD(P)-bd_dom_sf"/>
</dbReference>
<dbReference type="InterPro" id="IPR020904">
    <property type="entry name" value="Sc_DH/Rdtase_CS"/>
</dbReference>
<dbReference type="InterPro" id="IPR002347">
    <property type="entry name" value="SDR_fam"/>
</dbReference>
<dbReference type="PANTHER" id="PTHR43639">
    <property type="entry name" value="OXIDOREDUCTASE, SHORT-CHAIN DEHYDROGENASE/REDUCTASE FAMILY (AFU_ORTHOLOGUE AFUA_5G02870)"/>
    <property type="match status" value="1"/>
</dbReference>
<dbReference type="PANTHER" id="PTHR43639:SF1">
    <property type="entry name" value="SHORT-CHAIN DEHYDROGENASE_REDUCTASE FAMILY PROTEIN"/>
    <property type="match status" value="1"/>
</dbReference>
<dbReference type="Pfam" id="PF13561">
    <property type="entry name" value="adh_short_C2"/>
    <property type="match status" value="1"/>
</dbReference>
<dbReference type="PRINTS" id="PR00081">
    <property type="entry name" value="GDHRDH"/>
</dbReference>
<dbReference type="PRINTS" id="PR00080">
    <property type="entry name" value="SDRFAMILY"/>
</dbReference>
<dbReference type="SUPFAM" id="SSF51735">
    <property type="entry name" value="NAD(P)-binding Rossmann-fold domains"/>
    <property type="match status" value="1"/>
</dbReference>
<dbReference type="PROSITE" id="PS00061">
    <property type="entry name" value="ADH_SHORT"/>
    <property type="match status" value="1"/>
</dbReference>
<protein>
    <recommendedName>
        <fullName>Tetrahydroxynaphthalene reductase</fullName>
        <ecNumber>1.1.1.252</ecNumber>
    </recommendedName>
    <alternativeName>
        <fullName>T4HN reductase</fullName>
        <shortName>THNR</shortName>
    </alternativeName>
</protein>
<reference key="1">
    <citation type="journal article" date="1994" name="Eur. J. Biochem.">
        <title>Polyhydroxynaphthalene reductase involved in melanin biosynthesis in Magnaporthe grisea. Purification, cDNA cloning and sequencing.</title>
        <authorList>
            <person name="Vidal-Cros A."/>
            <person name="Viviani F."/>
            <person name="Labesse G."/>
            <person name="Boccara M."/>
            <person name="Gaudry M."/>
        </authorList>
    </citation>
    <scope>NUCLEOTIDE SEQUENCE [MRNA]</scope>
    <scope>PARTIAL PROTEIN SEQUENCE</scope>
    <scope>CHARACTERIZATION</scope>
    <source>
        <strain>Guyane 11</strain>
    </source>
</reference>
<reference key="2">
    <citation type="journal article" date="2006" name="J. Phytopathol.">
        <title>Isolation, characterization and preliminary genetic analysis of laboratory tricyclazole-resistant mutants of the rice blast fungus, Magnaporthe grisea.</title>
        <authorList>
            <person name="Zhang C.-Q."/>
            <person name="Zhu G.N."/>
            <person name="Ma Z.H."/>
            <person name="Zhou M.-G."/>
        </authorList>
        <dbReference type="AGRICOLA" id="IND43821857"/>
    </citation>
    <scope>NUCLEOTIDE SEQUENCE [GENOMIC DNA]</scope>
</reference>
<reference key="3">
    <citation type="journal article" date="2005" name="Nature">
        <title>The genome sequence of the rice blast fungus Magnaporthe grisea.</title>
        <authorList>
            <person name="Dean R.A."/>
            <person name="Talbot N.J."/>
            <person name="Ebbole D.J."/>
            <person name="Farman M.L."/>
            <person name="Mitchell T.K."/>
            <person name="Orbach M.J."/>
            <person name="Thon M.R."/>
            <person name="Kulkarni R."/>
            <person name="Xu J.-R."/>
            <person name="Pan H."/>
            <person name="Read N.D."/>
            <person name="Lee Y.-H."/>
            <person name="Carbone I."/>
            <person name="Brown D."/>
            <person name="Oh Y.Y."/>
            <person name="Donofrio N."/>
            <person name="Jeong J.S."/>
            <person name="Soanes D.M."/>
            <person name="Djonovic S."/>
            <person name="Kolomiets E."/>
            <person name="Rehmeyer C."/>
            <person name="Li W."/>
            <person name="Harding M."/>
            <person name="Kim S."/>
            <person name="Lebrun M.-H."/>
            <person name="Bohnert H."/>
            <person name="Coughlan S."/>
            <person name="Butler J."/>
            <person name="Calvo S.E."/>
            <person name="Ma L.-J."/>
            <person name="Nicol R."/>
            <person name="Purcell S."/>
            <person name="Nusbaum C."/>
            <person name="Galagan J.E."/>
            <person name="Birren B.W."/>
        </authorList>
    </citation>
    <scope>NUCLEOTIDE SEQUENCE [LARGE SCALE GENOMIC DNA]</scope>
    <source>
        <strain>70-15 / ATCC MYA-4617 / FGSC 8958</strain>
    </source>
</reference>
<reference key="4">
    <citation type="journal article" date="1996" name="Structure">
        <title>Crystal structure of the ternary complex of 1,3,8-trihydroxynaphthalene reductase from Magnaporthe grisea with NADPH and an active-site inhibitor.</title>
        <authorList>
            <person name="Andersson A."/>
            <person name="Jordan D.B."/>
            <person name="Schneider G."/>
            <person name="Lindqvist Y."/>
        </authorList>
    </citation>
    <scope>X-RAY CRYSTALLOGRAPHY (2.8 ANGSTROMS) IN COMPLEX WITH NADP AND INHIBITOR</scope>
    <source>
        <strain>4091-5-8</strain>
    </source>
</reference>
<reference key="5">
    <citation type="journal article" date="2001" name="Structure">
        <title>Structures of trihydroxynaphthalene reductase-fungicide complexes: implications for structure-based design and catalysis.</title>
        <authorList>
            <person name="Liao D.-I."/>
            <person name="Basarab G.S."/>
            <person name="Gatenby A.A."/>
            <person name="Valent B."/>
            <person name="Jordan D.B."/>
        </authorList>
    </citation>
    <scope>X-RAY CRYSTALLOGRAPHY (2.1 ANGSTROMS) IN COMPLEX WITH NADP AND FUNGICIDE</scope>
</reference>
<feature type="initiator methionine" description="Removed">
    <location>
        <position position="1"/>
    </location>
</feature>
<feature type="chain" id="PRO_0000054782" description="Tetrahydroxynaphthalene reductase">
    <location>
        <begin position="2"/>
        <end position="283"/>
    </location>
</feature>
<feature type="region of interest" description="Disordered" evidence="1">
    <location>
        <begin position="1"/>
        <end position="21"/>
    </location>
</feature>
<feature type="active site" description="Proton acceptor" evidence="2 3">
    <location>
        <position position="178"/>
    </location>
</feature>
<feature type="binding site" evidence="2 3">
    <location>
        <begin position="39"/>
        <end position="63"/>
    </location>
    <ligand>
        <name>NADP(+)</name>
        <dbReference type="ChEBI" id="CHEBI:58349"/>
    </ligand>
</feature>
<feature type="binding site">
    <location>
        <position position="164"/>
    </location>
    <ligand>
        <name>substrate</name>
    </ligand>
</feature>
<feature type="helix" evidence="5">
    <location>
        <begin position="12"/>
        <end position="14"/>
    </location>
</feature>
<feature type="helix" evidence="6">
    <location>
        <begin position="22"/>
        <end position="25"/>
    </location>
</feature>
<feature type="strand" evidence="6">
    <location>
        <begin position="31"/>
        <end position="34"/>
    </location>
</feature>
<feature type="turn" evidence="6">
    <location>
        <begin position="35"/>
        <end position="38"/>
    </location>
</feature>
<feature type="helix" evidence="6">
    <location>
        <begin position="40"/>
        <end position="51"/>
    </location>
</feature>
<feature type="strand" evidence="6">
    <location>
        <begin position="55"/>
        <end position="62"/>
    </location>
</feature>
<feature type="helix" evidence="6">
    <location>
        <begin position="64"/>
        <end position="76"/>
    </location>
</feature>
<feature type="strand" evidence="6">
    <location>
        <begin position="81"/>
        <end position="85"/>
    </location>
</feature>
<feature type="helix" evidence="6">
    <location>
        <begin position="91"/>
        <end position="105"/>
    </location>
</feature>
<feature type="strand" evidence="6">
    <location>
        <begin position="110"/>
        <end position="113"/>
    </location>
</feature>
<feature type="helix" evidence="6">
    <location>
        <begin position="123"/>
        <end position="125"/>
    </location>
</feature>
<feature type="helix" evidence="6">
    <location>
        <begin position="128"/>
        <end position="138"/>
    </location>
</feature>
<feature type="helix" evidence="6">
    <location>
        <begin position="140"/>
        <end position="152"/>
    </location>
</feature>
<feature type="strand" evidence="6">
    <location>
        <begin position="158"/>
        <end position="162"/>
    </location>
</feature>
<feature type="helix" evidence="6">
    <location>
        <begin position="165"/>
        <end position="167"/>
    </location>
</feature>
<feature type="helix" evidence="6">
    <location>
        <begin position="176"/>
        <end position="196"/>
    </location>
</feature>
<feature type="helix" evidence="6">
    <location>
        <begin position="197"/>
        <end position="199"/>
    </location>
</feature>
<feature type="strand" evidence="6">
    <location>
        <begin position="202"/>
        <end position="208"/>
    </location>
</feature>
<feature type="strand" evidence="6">
    <location>
        <begin position="211"/>
        <end position="213"/>
    </location>
</feature>
<feature type="helix" evidence="6">
    <location>
        <begin position="214"/>
        <end position="219"/>
    </location>
</feature>
<feature type="helix" evidence="6">
    <location>
        <begin position="220"/>
        <end position="223"/>
    </location>
</feature>
<feature type="helix" evidence="6">
    <location>
        <begin position="232"/>
        <end position="242"/>
    </location>
</feature>
<feature type="helix" evidence="6">
    <location>
        <begin position="252"/>
        <end position="263"/>
    </location>
</feature>
<feature type="helix" evidence="6">
    <location>
        <begin position="265"/>
        <end position="267"/>
    </location>
</feature>
<feature type="strand" evidence="6">
    <location>
        <begin position="274"/>
        <end position="278"/>
    </location>
</feature>
<proteinExistence type="evidence at protein level"/>
<name>T4HR_PYRO7</name>
<comment type="function">
    <text>Catalyzes the NADPH-dependent reduction of 1,3,6,8-tetrahydroxynaphthalene (T4HN) into (+)-scytalone and 1,3,8-trihydroxynaphthalene into (-)-vermelone. This enzyme is the biochemical target of several commercially important fungicides which are used to prevent blast disease in rice plants.</text>
</comment>
<comment type="catalytic activity">
    <reaction>
        <text>scytalone + NADP(+) = naphthalene-1,3,6,8-tetrol + NADPH + H(+)</text>
        <dbReference type="Rhea" id="RHEA:21908"/>
        <dbReference type="ChEBI" id="CHEBI:15378"/>
        <dbReference type="ChEBI" id="CHEBI:16945"/>
        <dbReference type="ChEBI" id="CHEBI:18365"/>
        <dbReference type="ChEBI" id="CHEBI:57783"/>
        <dbReference type="ChEBI" id="CHEBI:58349"/>
        <dbReference type="EC" id="1.1.1.252"/>
    </reaction>
</comment>
<comment type="pathway">
    <text>Pigment biosynthesis; melanin biosynthesis.</text>
</comment>
<comment type="subunit">
    <text evidence="2 3">Homotetramer.</text>
</comment>
<comment type="similarity">
    <text evidence="4">Belongs to the short-chain dehydrogenases/reductases (SDR) family.</text>
</comment>